<gene>
    <name evidence="1" type="primary">fusA</name>
    <name type="ordered locus">LS215_1508</name>
</gene>
<reference key="1">
    <citation type="journal article" date="2009" name="Proc. Natl. Acad. Sci. U.S.A.">
        <title>Biogeography of the Sulfolobus islandicus pan-genome.</title>
        <authorList>
            <person name="Reno M.L."/>
            <person name="Held N.L."/>
            <person name="Fields C.J."/>
            <person name="Burke P.V."/>
            <person name="Whitaker R.J."/>
        </authorList>
    </citation>
    <scope>NUCLEOTIDE SEQUENCE [LARGE SCALE GENOMIC DNA]</scope>
    <source>
        <strain>L.S.2.15 / Lassen #1</strain>
    </source>
</reference>
<feature type="chain" id="PRO_1000202315" description="Elongation factor 2">
    <location>
        <begin position="1"/>
        <end position="736"/>
    </location>
</feature>
<feature type="domain" description="tr-type G">
    <location>
        <begin position="18"/>
        <end position="234"/>
    </location>
</feature>
<feature type="binding site" evidence="1">
    <location>
        <begin position="27"/>
        <end position="34"/>
    </location>
    <ligand>
        <name>GTP</name>
        <dbReference type="ChEBI" id="CHEBI:37565"/>
    </ligand>
</feature>
<feature type="binding site" evidence="1">
    <location>
        <begin position="93"/>
        <end position="97"/>
    </location>
    <ligand>
        <name>GTP</name>
        <dbReference type="ChEBI" id="CHEBI:37565"/>
    </ligand>
</feature>
<feature type="binding site" evidence="1">
    <location>
        <begin position="147"/>
        <end position="150"/>
    </location>
    <ligand>
        <name>GTP</name>
        <dbReference type="ChEBI" id="CHEBI:37565"/>
    </ligand>
</feature>
<feature type="modified residue" description="Diphthamide" evidence="1">
    <location>
        <position position="603"/>
    </location>
</feature>
<accession>C3MQ53</accession>
<dbReference type="EMBL" id="CP001399">
    <property type="protein sequence ID" value="ACP35516.1"/>
    <property type="molecule type" value="Genomic_DNA"/>
</dbReference>
<dbReference type="RefSeq" id="WP_012711411.1">
    <property type="nucleotide sequence ID" value="NC_012589.1"/>
</dbReference>
<dbReference type="SMR" id="C3MQ53"/>
<dbReference type="KEGG" id="sis:LS215_1508"/>
<dbReference type="HOGENOM" id="CLU_002794_11_1_2"/>
<dbReference type="OrthoDB" id="6290at2157"/>
<dbReference type="Proteomes" id="UP000001747">
    <property type="component" value="Chromosome"/>
</dbReference>
<dbReference type="GO" id="GO:0005829">
    <property type="term" value="C:cytosol"/>
    <property type="evidence" value="ECO:0007669"/>
    <property type="project" value="TreeGrafter"/>
</dbReference>
<dbReference type="GO" id="GO:1990904">
    <property type="term" value="C:ribonucleoprotein complex"/>
    <property type="evidence" value="ECO:0007669"/>
    <property type="project" value="TreeGrafter"/>
</dbReference>
<dbReference type="GO" id="GO:0005525">
    <property type="term" value="F:GTP binding"/>
    <property type="evidence" value="ECO:0007669"/>
    <property type="project" value="UniProtKB-UniRule"/>
</dbReference>
<dbReference type="GO" id="GO:0003924">
    <property type="term" value="F:GTPase activity"/>
    <property type="evidence" value="ECO:0007669"/>
    <property type="project" value="InterPro"/>
</dbReference>
<dbReference type="GO" id="GO:0003746">
    <property type="term" value="F:translation elongation factor activity"/>
    <property type="evidence" value="ECO:0007669"/>
    <property type="project" value="UniProtKB-UniRule"/>
</dbReference>
<dbReference type="CDD" id="cd01681">
    <property type="entry name" value="aeEF2_snRNP_like_IV"/>
    <property type="match status" value="1"/>
</dbReference>
<dbReference type="CDD" id="cd01885">
    <property type="entry name" value="EF2"/>
    <property type="match status" value="1"/>
</dbReference>
<dbReference type="CDD" id="cd16268">
    <property type="entry name" value="EF2_II"/>
    <property type="match status" value="1"/>
</dbReference>
<dbReference type="CDD" id="cd16261">
    <property type="entry name" value="EF2_snRNP_III"/>
    <property type="match status" value="1"/>
</dbReference>
<dbReference type="CDD" id="cd01514">
    <property type="entry name" value="Elongation_Factor_C"/>
    <property type="match status" value="1"/>
</dbReference>
<dbReference type="FunFam" id="3.30.230.10:FF:000009">
    <property type="entry name" value="116 kDa U5 small nuclear ribonucleoprotein component"/>
    <property type="match status" value="1"/>
</dbReference>
<dbReference type="FunFam" id="3.30.70.240:FF:000010">
    <property type="entry name" value="Elongation factor 2"/>
    <property type="match status" value="1"/>
</dbReference>
<dbReference type="FunFam" id="3.40.50.300:FF:000684">
    <property type="entry name" value="Elongation factor 2"/>
    <property type="match status" value="1"/>
</dbReference>
<dbReference type="FunFam" id="3.30.70.870:FF:000002">
    <property type="entry name" value="Translation elongation factor 2"/>
    <property type="match status" value="1"/>
</dbReference>
<dbReference type="Gene3D" id="3.30.230.10">
    <property type="match status" value="1"/>
</dbReference>
<dbReference type="Gene3D" id="3.30.70.240">
    <property type="match status" value="1"/>
</dbReference>
<dbReference type="Gene3D" id="3.30.70.870">
    <property type="entry name" value="Elongation Factor G (Translational Gtpase), domain 3"/>
    <property type="match status" value="1"/>
</dbReference>
<dbReference type="Gene3D" id="3.40.50.300">
    <property type="entry name" value="P-loop containing nucleotide triphosphate hydrolases"/>
    <property type="match status" value="1"/>
</dbReference>
<dbReference type="Gene3D" id="2.40.30.10">
    <property type="entry name" value="Translation factors"/>
    <property type="match status" value="1"/>
</dbReference>
<dbReference type="HAMAP" id="MF_00054_A">
    <property type="entry name" value="EF_G_EF_2_A"/>
    <property type="match status" value="1"/>
</dbReference>
<dbReference type="InterPro" id="IPR041095">
    <property type="entry name" value="EFG_II"/>
</dbReference>
<dbReference type="InterPro" id="IPR035647">
    <property type="entry name" value="EFG_III/V"/>
</dbReference>
<dbReference type="InterPro" id="IPR000640">
    <property type="entry name" value="EFG_V-like"/>
</dbReference>
<dbReference type="InterPro" id="IPR004161">
    <property type="entry name" value="EFTu-like_2"/>
</dbReference>
<dbReference type="InterPro" id="IPR031157">
    <property type="entry name" value="G_TR_CS"/>
</dbReference>
<dbReference type="InterPro" id="IPR027417">
    <property type="entry name" value="P-loop_NTPase"/>
</dbReference>
<dbReference type="InterPro" id="IPR020568">
    <property type="entry name" value="Ribosomal_Su5_D2-typ_SF"/>
</dbReference>
<dbReference type="InterPro" id="IPR014721">
    <property type="entry name" value="Ribsml_uS5_D2-typ_fold_subgr"/>
</dbReference>
<dbReference type="InterPro" id="IPR005225">
    <property type="entry name" value="Small_GTP-bd"/>
</dbReference>
<dbReference type="InterPro" id="IPR000795">
    <property type="entry name" value="T_Tr_GTP-bd_dom"/>
</dbReference>
<dbReference type="InterPro" id="IPR009000">
    <property type="entry name" value="Transl_B-barrel_sf"/>
</dbReference>
<dbReference type="InterPro" id="IPR004543">
    <property type="entry name" value="Transl_elong_EFG/EF2_arc"/>
</dbReference>
<dbReference type="InterPro" id="IPR005517">
    <property type="entry name" value="Transl_elong_EFG/EF2_IV"/>
</dbReference>
<dbReference type="NCBIfam" id="TIGR00490">
    <property type="entry name" value="aEF-2"/>
    <property type="match status" value="1"/>
</dbReference>
<dbReference type="NCBIfam" id="TIGR00231">
    <property type="entry name" value="small_GTP"/>
    <property type="match status" value="1"/>
</dbReference>
<dbReference type="PANTHER" id="PTHR42908:SF3">
    <property type="entry name" value="ELONGATION FACTOR-LIKE GTPASE 1"/>
    <property type="match status" value="1"/>
</dbReference>
<dbReference type="PANTHER" id="PTHR42908">
    <property type="entry name" value="TRANSLATION ELONGATION FACTOR-RELATED"/>
    <property type="match status" value="1"/>
</dbReference>
<dbReference type="Pfam" id="PF00679">
    <property type="entry name" value="EFG_C"/>
    <property type="match status" value="1"/>
</dbReference>
<dbReference type="Pfam" id="PF14492">
    <property type="entry name" value="EFG_III"/>
    <property type="match status" value="1"/>
</dbReference>
<dbReference type="Pfam" id="PF03764">
    <property type="entry name" value="EFG_IV"/>
    <property type="match status" value="1"/>
</dbReference>
<dbReference type="Pfam" id="PF00009">
    <property type="entry name" value="GTP_EFTU"/>
    <property type="match status" value="1"/>
</dbReference>
<dbReference type="Pfam" id="PF03144">
    <property type="entry name" value="GTP_EFTU_D2"/>
    <property type="match status" value="1"/>
</dbReference>
<dbReference type="PRINTS" id="PR00315">
    <property type="entry name" value="ELONGATNFCT"/>
</dbReference>
<dbReference type="SMART" id="SM00838">
    <property type="entry name" value="EFG_C"/>
    <property type="match status" value="1"/>
</dbReference>
<dbReference type="SMART" id="SM00889">
    <property type="entry name" value="EFG_IV"/>
    <property type="match status" value="1"/>
</dbReference>
<dbReference type="SUPFAM" id="SSF54980">
    <property type="entry name" value="EF-G C-terminal domain-like"/>
    <property type="match status" value="2"/>
</dbReference>
<dbReference type="SUPFAM" id="SSF52540">
    <property type="entry name" value="P-loop containing nucleoside triphosphate hydrolases"/>
    <property type="match status" value="1"/>
</dbReference>
<dbReference type="SUPFAM" id="SSF54211">
    <property type="entry name" value="Ribosomal protein S5 domain 2-like"/>
    <property type="match status" value="1"/>
</dbReference>
<dbReference type="SUPFAM" id="SSF50447">
    <property type="entry name" value="Translation proteins"/>
    <property type="match status" value="1"/>
</dbReference>
<dbReference type="PROSITE" id="PS00301">
    <property type="entry name" value="G_TR_1"/>
    <property type="match status" value="1"/>
</dbReference>
<dbReference type="PROSITE" id="PS51722">
    <property type="entry name" value="G_TR_2"/>
    <property type="match status" value="1"/>
</dbReference>
<sequence length="736" mass="81793">MPRYKTVEQVLSLMKDRTRVRNIGIIAHVDHGKTTTSDTLLAASGIISPKVAGEALALDYLSVEQQRGITVKAANISLYHEAEGKGYVINLIDTPGHVDFSGRVTRSLRVLDGSIVVVDAVEGIMTQTETVLRQSLEERVRPILFINKVDRLVKELKLSPQEMLNRLLDIIRQVNNLIDMYGEPEFKEKWMINPQAGNVIFGSAKDKWGFSLPMAQKKGINMKNVIDAYTASDKSKLEELAAQAPINEALLDAAIKFVPNPIEAQKYRIPKIWKGDLDNELAKAMLNADPNGPIVFMITDMKVDPHAGLVATGRVFSGTLRSGEELWLVNAKTSQRILQVSLYMGPTRELAEEIPAGNIAAVLGLDRARSGETAISVGFSNVQGSFERLHYISEPVVTIAVEPKNPKDLTKMIDALRKLSIEDPNLVVKINEETGEYLLSGMGFLHLEVSLQLLRENYGIDVVTTPPIVVYRESIRAKSQVFEGKSPNKHNKFYLSVEPLNDKTIELISNGTIREDMDSKEMAKILRDEASWDYDEAKRIIAIDENVNVFVDLTSGVQHLREVMDTVLQGFRLAMKEGPLAHEPIRGVKVILHDAVIHEDPAHRGPAQIYPAVRNSIFAGFLTSRPTLLEPIQKLDIRVPADLIGNVTAVITRKRGKILDVSQIANMSRITAEIPVSESYDMASELRGSTGGRAFWGTEFSRWAPVPDSILLDVVTKIRERKGLPKELPKVEDFLS</sequence>
<keyword id="KW-0963">Cytoplasm</keyword>
<keyword id="KW-0251">Elongation factor</keyword>
<keyword id="KW-0342">GTP-binding</keyword>
<keyword id="KW-0547">Nucleotide-binding</keyword>
<keyword id="KW-0648">Protein biosynthesis</keyword>
<comment type="function">
    <text evidence="1">Catalyzes the GTP-dependent ribosomal translocation step during translation elongation. During this step, the ribosome changes from the pre-translocational (PRE) to the post-translocational (POST) state as the newly formed A-site-bound peptidyl-tRNA and P-site-bound deacylated tRNA move to the P and E sites, respectively. Catalyzes the coordinated movement of the two tRNA molecules, the mRNA and conformational changes in the ribosome.</text>
</comment>
<comment type="subcellular location">
    <subcellularLocation>
        <location evidence="1">Cytoplasm</location>
    </subcellularLocation>
</comment>
<comment type="similarity">
    <text evidence="1">Belongs to the TRAFAC class translation factor GTPase superfamily. Classic translation factor GTPase family. EF-G/EF-2 subfamily.</text>
</comment>
<protein>
    <recommendedName>
        <fullName evidence="1">Elongation factor 2</fullName>
        <shortName evidence="1">EF-2</shortName>
    </recommendedName>
</protein>
<evidence type="ECO:0000255" key="1">
    <source>
        <dbReference type="HAMAP-Rule" id="MF_00054"/>
    </source>
</evidence>
<name>EF2_SACI2</name>
<proteinExistence type="inferred from homology"/>
<organism>
    <name type="scientific">Saccharolobus islandicus (strain L.S.2.15 / Lassen #1)</name>
    <name type="common">Sulfolobus islandicus</name>
    <dbReference type="NCBI Taxonomy" id="429572"/>
    <lineage>
        <taxon>Archaea</taxon>
        <taxon>Thermoproteota</taxon>
        <taxon>Thermoprotei</taxon>
        <taxon>Sulfolobales</taxon>
        <taxon>Sulfolobaceae</taxon>
        <taxon>Saccharolobus</taxon>
    </lineage>
</organism>